<accession>B2S676</accession>
<evidence type="ECO:0000255" key="1">
    <source>
        <dbReference type="HAMAP-Rule" id="MF_01320"/>
    </source>
</evidence>
<evidence type="ECO:0000256" key="2">
    <source>
        <dbReference type="SAM" id="MobiDB-lite"/>
    </source>
</evidence>
<evidence type="ECO:0000305" key="3"/>
<protein>
    <recommendedName>
        <fullName evidence="1">Large ribosomal subunit protein uL2</fullName>
    </recommendedName>
    <alternativeName>
        <fullName evidence="3">50S ribosomal protein L2</fullName>
    </alternativeName>
</protein>
<comment type="function">
    <text evidence="1">One of the primary rRNA binding proteins. Required for association of the 30S and 50S subunits to form the 70S ribosome, for tRNA binding and peptide bond formation. It has been suggested to have peptidyltransferase activity; this is somewhat controversial. Makes several contacts with the 16S rRNA in the 70S ribosome.</text>
</comment>
<comment type="subunit">
    <text evidence="1">Part of the 50S ribosomal subunit. Forms a bridge to the 30S subunit in the 70S ribosome.</text>
</comment>
<comment type="similarity">
    <text evidence="1">Belongs to the universal ribosomal protein uL2 family.</text>
</comment>
<keyword id="KW-0687">Ribonucleoprotein</keyword>
<keyword id="KW-0689">Ribosomal protein</keyword>
<keyword id="KW-0694">RNA-binding</keyword>
<keyword id="KW-0699">rRNA-binding</keyword>
<organism>
    <name type="scientific">Brucella abortus (strain S19)</name>
    <dbReference type="NCBI Taxonomy" id="430066"/>
    <lineage>
        <taxon>Bacteria</taxon>
        <taxon>Pseudomonadati</taxon>
        <taxon>Pseudomonadota</taxon>
        <taxon>Alphaproteobacteria</taxon>
        <taxon>Hyphomicrobiales</taxon>
        <taxon>Brucellaceae</taxon>
        <taxon>Brucella/Ochrobactrum group</taxon>
        <taxon>Brucella</taxon>
    </lineage>
</organism>
<name>RL2_BRUA1</name>
<gene>
    <name evidence="1" type="primary">rplB</name>
    <name type="ordered locus">BAbS19_I11680</name>
</gene>
<feature type="chain" id="PRO_1000141514" description="Large ribosomal subunit protein uL2">
    <location>
        <begin position="1"/>
        <end position="277"/>
    </location>
</feature>
<feature type="region of interest" description="Disordered" evidence="2">
    <location>
        <begin position="222"/>
        <end position="277"/>
    </location>
</feature>
<reference key="1">
    <citation type="journal article" date="2008" name="PLoS ONE">
        <title>Genome sequence of Brucella abortus vaccine strain S19 compared to virulent strains yields candidate virulence genes.</title>
        <authorList>
            <person name="Crasta O.R."/>
            <person name="Folkerts O."/>
            <person name="Fei Z."/>
            <person name="Mane S.P."/>
            <person name="Evans C."/>
            <person name="Martino-Catt S."/>
            <person name="Bricker B."/>
            <person name="Yu G."/>
            <person name="Du L."/>
            <person name="Sobral B.W."/>
        </authorList>
    </citation>
    <scope>NUCLEOTIDE SEQUENCE [LARGE SCALE GENOMIC DNA]</scope>
    <source>
        <strain>S19</strain>
    </source>
</reference>
<dbReference type="EMBL" id="CP000887">
    <property type="protein sequence ID" value="ACD72673.1"/>
    <property type="molecule type" value="Genomic_DNA"/>
</dbReference>
<dbReference type="RefSeq" id="WP_002964359.1">
    <property type="nucleotide sequence ID" value="NC_010742.1"/>
</dbReference>
<dbReference type="SMR" id="B2S676"/>
<dbReference type="GeneID" id="97533527"/>
<dbReference type="KEGG" id="bmc:BAbS19_I11680"/>
<dbReference type="HOGENOM" id="CLU_036235_2_1_5"/>
<dbReference type="Proteomes" id="UP000002565">
    <property type="component" value="Chromosome 1"/>
</dbReference>
<dbReference type="GO" id="GO:0015934">
    <property type="term" value="C:large ribosomal subunit"/>
    <property type="evidence" value="ECO:0007669"/>
    <property type="project" value="InterPro"/>
</dbReference>
<dbReference type="GO" id="GO:0019843">
    <property type="term" value="F:rRNA binding"/>
    <property type="evidence" value="ECO:0007669"/>
    <property type="project" value="UniProtKB-UniRule"/>
</dbReference>
<dbReference type="GO" id="GO:0003735">
    <property type="term" value="F:structural constituent of ribosome"/>
    <property type="evidence" value="ECO:0007669"/>
    <property type="project" value="InterPro"/>
</dbReference>
<dbReference type="GO" id="GO:0016740">
    <property type="term" value="F:transferase activity"/>
    <property type="evidence" value="ECO:0007669"/>
    <property type="project" value="InterPro"/>
</dbReference>
<dbReference type="GO" id="GO:0002181">
    <property type="term" value="P:cytoplasmic translation"/>
    <property type="evidence" value="ECO:0007669"/>
    <property type="project" value="TreeGrafter"/>
</dbReference>
<dbReference type="FunFam" id="2.30.30.30:FF:000055">
    <property type="entry name" value="50S ribosomal protein L2"/>
    <property type="match status" value="1"/>
</dbReference>
<dbReference type="FunFam" id="2.40.50.140:FF:000003">
    <property type="entry name" value="50S ribosomal protein L2"/>
    <property type="match status" value="1"/>
</dbReference>
<dbReference type="FunFam" id="4.10.950.10:FF:000001">
    <property type="entry name" value="50S ribosomal protein L2"/>
    <property type="match status" value="1"/>
</dbReference>
<dbReference type="Gene3D" id="2.30.30.30">
    <property type="match status" value="1"/>
</dbReference>
<dbReference type="Gene3D" id="2.40.50.140">
    <property type="entry name" value="Nucleic acid-binding proteins"/>
    <property type="match status" value="1"/>
</dbReference>
<dbReference type="Gene3D" id="4.10.950.10">
    <property type="entry name" value="Ribosomal protein L2, domain 3"/>
    <property type="match status" value="1"/>
</dbReference>
<dbReference type="HAMAP" id="MF_01320_B">
    <property type="entry name" value="Ribosomal_uL2_B"/>
    <property type="match status" value="1"/>
</dbReference>
<dbReference type="InterPro" id="IPR012340">
    <property type="entry name" value="NA-bd_OB-fold"/>
</dbReference>
<dbReference type="InterPro" id="IPR014722">
    <property type="entry name" value="Rib_uL2_dom2"/>
</dbReference>
<dbReference type="InterPro" id="IPR002171">
    <property type="entry name" value="Ribosomal_uL2"/>
</dbReference>
<dbReference type="InterPro" id="IPR005880">
    <property type="entry name" value="Ribosomal_uL2_bac/org-type"/>
</dbReference>
<dbReference type="InterPro" id="IPR022669">
    <property type="entry name" value="Ribosomal_uL2_C"/>
</dbReference>
<dbReference type="InterPro" id="IPR022671">
    <property type="entry name" value="Ribosomal_uL2_CS"/>
</dbReference>
<dbReference type="InterPro" id="IPR014726">
    <property type="entry name" value="Ribosomal_uL2_dom3"/>
</dbReference>
<dbReference type="InterPro" id="IPR022666">
    <property type="entry name" value="Ribosomal_uL2_RNA-bd_dom"/>
</dbReference>
<dbReference type="InterPro" id="IPR008991">
    <property type="entry name" value="Translation_prot_SH3-like_sf"/>
</dbReference>
<dbReference type="NCBIfam" id="TIGR01171">
    <property type="entry name" value="rplB_bact"/>
    <property type="match status" value="1"/>
</dbReference>
<dbReference type="PANTHER" id="PTHR13691:SF5">
    <property type="entry name" value="LARGE RIBOSOMAL SUBUNIT PROTEIN UL2M"/>
    <property type="match status" value="1"/>
</dbReference>
<dbReference type="PANTHER" id="PTHR13691">
    <property type="entry name" value="RIBOSOMAL PROTEIN L2"/>
    <property type="match status" value="1"/>
</dbReference>
<dbReference type="Pfam" id="PF00181">
    <property type="entry name" value="Ribosomal_L2"/>
    <property type="match status" value="1"/>
</dbReference>
<dbReference type="Pfam" id="PF03947">
    <property type="entry name" value="Ribosomal_L2_C"/>
    <property type="match status" value="1"/>
</dbReference>
<dbReference type="PIRSF" id="PIRSF002158">
    <property type="entry name" value="Ribosomal_L2"/>
    <property type="match status" value="1"/>
</dbReference>
<dbReference type="SMART" id="SM01383">
    <property type="entry name" value="Ribosomal_L2"/>
    <property type="match status" value="1"/>
</dbReference>
<dbReference type="SMART" id="SM01382">
    <property type="entry name" value="Ribosomal_L2_C"/>
    <property type="match status" value="1"/>
</dbReference>
<dbReference type="SUPFAM" id="SSF50249">
    <property type="entry name" value="Nucleic acid-binding proteins"/>
    <property type="match status" value="1"/>
</dbReference>
<dbReference type="SUPFAM" id="SSF50104">
    <property type="entry name" value="Translation proteins SH3-like domain"/>
    <property type="match status" value="1"/>
</dbReference>
<dbReference type="PROSITE" id="PS00467">
    <property type="entry name" value="RIBOSOMAL_L2"/>
    <property type="match status" value="1"/>
</dbReference>
<proteinExistence type="inferred from homology"/>
<sequence>MALKHFNPITPGQRQLVIVDRSELYKGKPVKSLTEGLSKKGGRNNTGRITVRFQGGGHKRSYRFIDFKRRKLDVVGTVERLEYDPNRTAFIALIRYTDGELAYILAPQRLAVGDQVVAGNSVDVKPGNAMPLSSMPVGTIIHNVELKPGKGGQIARSAGTYAQLVGRDQGMAILRLNSGEQRLVSGACFASVGAVSNPDHGNINDGKAGRSVWRGKRPHVRGVAMNPVDHPHGGGEGRTSGGRHPVTPWGKPTKGKKTRSNKATDKFIMRSRHQRKK</sequence>